<keyword id="KW-0025">Alternative splicing</keyword>
<keyword id="KW-0472">Membrane</keyword>
<keyword id="KW-1185">Reference proteome</keyword>
<keyword id="KW-0812">Transmembrane</keyword>
<keyword id="KW-1133">Transmembrane helix</keyword>
<protein>
    <recommendedName>
        <fullName>Putative microRNA 17 host gene protein</fullName>
    </recommendedName>
    <alternativeName>
        <fullName>Putative microRNA host gene 1 protein</fullName>
    </alternativeName>
</protein>
<accession>Q75NE6</accession>
<accession>A4QMU7</accession>
<accession>Q75NE7</accession>
<evidence type="ECO:0000255" key="1"/>
<evidence type="ECO:0000269" key="2">
    <source>
    </source>
</evidence>
<evidence type="ECO:0000303" key="3">
    <source>
    </source>
</evidence>
<evidence type="ECO:0000305" key="4"/>
<dbReference type="EMBL" id="AB176707">
    <property type="protein sequence ID" value="BAD18386.1"/>
    <property type="molecule type" value="mRNA"/>
</dbReference>
<dbReference type="EMBL" id="AB176708">
    <property type="protein sequence ID" value="BAD18387.1"/>
    <property type="molecule type" value="mRNA"/>
</dbReference>
<dbReference type="EMBL" id="AL138714">
    <property type="status" value="NOT_ANNOTATED_CDS"/>
    <property type="molecule type" value="Genomic_DNA"/>
</dbReference>
<dbReference type="EMBL" id="AL162375">
    <property type="status" value="NOT_ANNOTATED_CDS"/>
    <property type="molecule type" value="Genomic_DNA"/>
</dbReference>
<dbReference type="EMBL" id="BC109082">
    <property type="protein sequence ID" value="AAI09083.1"/>
    <property type="molecule type" value="mRNA"/>
</dbReference>
<dbReference type="BioMuta" id="HGNC:23564"/>
<dbReference type="ProteomicsDB" id="68645">
    <molecule id="Q75NE6-1"/>
</dbReference>
<dbReference type="ProteomicsDB" id="68646">
    <molecule id="Q75NE6-2"/>
</dbReference>
<dbReference type="AGR" id="HGNC:23564"/>
<dbReference type="GeneCards" id="MIR17HG"/>
<dbReference type="HGNC" id="HGNC:23564">
    <property type="gene designation" value="MIR17HG"/>
</dbReference>
<dbReference type="MalaCards" id="MIR17HG"/>
<dbReference type="MIM" id="609415">
    <property type="type" value="gene"/>
</dbReference>
<dbReference type="MIM" id="614326">
    <property type="type" value="phenotype"/>
</dbReference>
<dbReference type="neXtProt" id="NX_Q75NE6"/>
<dbReference type="Orphanet" id="391646">
    <property type="disease" value="Feingold syndrome type 2"/>
</dbReference>
<dbReference type="InParanoid" id="Q75NE6"/>
<dbReference type="PAN-GO" id="Q75NE6">
    <property type="GO annotations" value="0 GO annotations based on evolutionary models"/>
</dbReference>
<dbReference type="PathwayCommons" id="Q75NE6"/>
<dbReference type="ChiTaRS" id="MIR17HG">
    <property type="organism name" value="human"/>
</dbReference>
<dbReference type="Pharos" id="Q75NE6">
    <property type="development level" value="Tdark"/>
</dbReference>
<dbReference type="Proteomes" id="UP000005640">
    <property type="component" value="Unplaced"/>
</dbReference>
<dbReference type="RNAct" id="Q75NE6">
    <property type="molecule type" value="protein"/>
</dbReference>
<dbReference type="GO" id="GO:0016020">
    <property type="term" value="C:membrane"/>
    <property type="evidence" value="ECO:0007669"/>
    <property type="project" value="UniProtKB-SubCell"/>
</dbReference>
<gene>
    <name type="primary">MIR17HG</name>
    <name type="synonym">C13orf25</name>
    <name type="synonym">MIRH1</name>
    <name type="synonym">MIRHG1</name>
</gene>
<comment type="subcellular location">
    <subcellularLocation>
        <location evidence="4">Membrane</location>
        <topology evidence="4">Single-pass membrane protein</topology>
    </subcellularLocation>
</comment>
<comment type="alternative products">
    <event type="alternative splicing"/>
    <isoform>
        <id>Q75NE6-1</id>
        <name>1</name>
        <name>B</name>
        <sequence type="displayed"/>
    </isoform>
    <isoform>
        <id>Q75NE6-2</id>
        <name>2</name>
        <name>A</name>
        <sequence type="described" ref="VSP_022775 VSP_022776"/>
    </isoform>
</comment>
<comment type="tissue specificity">
    <text>Highly expressed in B-cell lymphoma and lung cancer.</text>
</comment>
<comment type="disease" evidence="2">
    <disease id="DI-03283">
        <name>Feingold syndrome 2</name>
        <acronym>FGLDS2</acronym>
        <description>A syndrome characterized by microcephaly, short stature, and digital abnormalities including brachydactyly, brachymesophalangy of the second and fifth fingers, hypoplastic thumbs of variable severity, and cutaneous syndactyly of the toes.</description>
        <dbReference type="MIM" id="614326"/>
    </disease>
    <text>The disease is caused by variants affecting the gene represented in this entry. Microdeletions encompassing the MIR17HG locus can be responsible of FGLDS2.</text>
</comment>
<comment type="miscellaneous">
    <text>The microRNAs that are encoded in a MIR17HG intron stimulate growth of cultured lung cancer cells.</text>
</comment>
<comment type="caution">
    <text evidence="4">Product of a dubious CDS prediction. The MIR17HG transcript shows predominant nuclear localization and may not be efficiently translated into protein.</text>
</comment>
<organism>
    <name type="scientific">Homo sapiens</name>
    <name type="common">Human</name>
    <dbReference type="NCBI Taxonomy" id="9606"/>
    <lineage>
        <taxon>Eukaryota</taxon>
        <taxon>Metazoa</taxon>
        <taxon>Chordata</taxon>
        <taxon>Craniata</taxon>
        <taxon>Vertebrata</taxon>
        <taxon>Euteleostomi</taxon>
        <taxon>Mammalia</taxon>
        <taxon>Eutheria</taxon>
        <taxon>Euarchontoglires</taxon>
        <taxon>Primates</taxon>
        <taxon>Haplorrhini</taxon>
        <taxon>Catarrhini</taxon>
        <taxon>Hominidae</taxon>
        <taxon>Homo</taxon>
    </lineage>
</organism>
<sequence>MFCHVDVKISSKRYTWTKLPLNVPKLVLIYLQSHFVLFFFSMCQSIWERPAIGRATTSSASWMVGYDCLL</sequence>
<name>MIRH1_HUMAN</name>
<reference key="1">
    <citation type="journal article" date="2004" name="Cancer Res.">
        <title>Identification and characterization of a novel gene, C13orf25, as a target for 13q31-q32 amplification in malignant lymphoma.</title>
        <authorList>
            <person name="Ota A."/>
            <person name="Tagawa H."/>
            <person name="Karnan S."/>
            <person name="Tsuzuki S."/>
            <person name="Karpas A."/>
            <person name="Kira S."/>
            <person name="Yoshida Y."/>
            <person name="Seto M."/>
        </authorList>
    </citation>
    <scope>NUCLEOTIDE SEQUENCE [MRNA] (ISOFORMS 1 AND 2)</scope>
</reference>
<reference key="2">
    <citation type="journal article" date="2004" name="Nature">
        <title>The DNA sequence and analysis of human chromosome 13.</title>
        <authorList>
            <person name="Dunham A."/>
            <person name="Matthews L.H."/>
            <person name="Burton J."/>
            <person name="Ashurst J.L."/>
            <person name="Howe K.L."/>
            <person name="Ashcroft K.J."/>
            <person name="Beare D.M."/>
            <person name="Burford D.C."/>
            <person name="Hunt S.E."/>
            <person name="Griffiths-Jones S."/>
            <person name="Jones M.C."/>
            <person name="Keenan S.J."/>
            <person name="Oliver K."/>
            <person name="Scott C.E."/>
            <person name="Ainscough R."/>
            <person name="Almeida J.P."/>
            <person name="Ambrose K.D."/>
            <person name="Andrews D.T."/>
            <person name="Ashwell R.I.S."/>
            <person name="Babbage A.K."/>
            <person name="Bagguley C.L."/>
            <person name="Bailey J."/>
            <person name="Bannerjee R."/>
            <person name="Barlow K.F."/>
            <person name="Bates K."/>
            <person name="Beasley H."/>
            <person name="Bird C.P."/>
            <person name="Bray-Allen S."/>
            <person name="Brown A.J."/>
            <person name="Brown J.Y."/>
            <person name="Burrill W."/>
            <person name="Carder C."/>
            <person name="Carter N.P."/>
            <person name="Chapman J.C."/>
            <person name="Clamp M.E."/>
            <person name="Clark S.Y."/>
            <person name="Clarke G."/>
            <person name="Clee C.M."/>
            <person name="Clegg S.C."/>
            <person name="Cobley V."/>
            <person name="Collins J.E."/>
            <person name="Corby N."/>
            <person name="Coville G.J."/>
            <person name="Deloukas P."/>
            <person name="Dhami P."/>
            <person name="Dunham I."/>
            <person name="Dunn M."/>
            <person name="Earthrowl M.E."/>
            <person name="Ellington A.G."/>
            <person name="Faulkner L."/>
            <person name="Frankish A.G."/>
            <person name="Frankland J."/>
            <person name="French L."/>
            <person name="Garner P."/>
            <person name="Garnett J."/>
            <person name="Gilbert J.G.R."/>
            <person name="Gilson C.J."/>
            <person name="Ghori J."/>
            <person name="Grafham D.V."/>
            <person name="Gribble S.M."/>
            <person name="Griffiths C."/>
            <person name="Hall R.E."/>
            <person name="Hammond S."/>
            <person name="Harley J.L."/>
            <person name="Hart E.A."/>
            <person name="Heath P.D."/>
            <person name="Howden P.J."/>
            <person name="Huckle E.J."/>
            <person name="Hunt P.J."/>
            <person name="Hunt A.R."/>
            <person name="Johnson C."/>
            <person name="Johnson D."/>
            <person name="Kay M."/>
            <person name="Kimberley A.M."/>
            <person name="King A."/>
            <person name="Laird G.K."/>
            <person name="Langford C.J."/>
            <person name="Lawlor S."/>
            <person name="Leongamornlert D.A."/>
            <person name="Lloyd D.M."/>
            <person name="Lloyd C."/>
            <person name="Loveland J.E."/>
            <person name="Lovell J."/>
            <person name="Martin S."/>
            <person name="Mashreghi-Mohammadi M."/>
            <person name="McLaren S.J."/>
            <person name="McMurray A."/>
            <person name="Milne S."/>
            <person name="Moore M.J.F."/>
            <person name="Nickerson T."/>
            <person name="Palmer S.A."/>
            <person name="Pearce A.V."/>
            <person name="Peck A.I."/>
            <person name="Pelan S."/>
            <person name="Phillimore B."/>
            <person name="Porter K.M."/>
            <person name="Rice C.M."/>
            <person name="Searle S."/>
            <person name="Sehra H.K."/>
            <person name="Shownkeen R."/>
            <person name="Skuce C.D."/>
            <person name="Smith M."/>
            <person name="Steward C.A."/>
            <person name="Sycamore N."/>
            <person name="Tester J."/>
            <person name="Thomas D.W."/>
            <person name="Tracey A."/>
            <person name="Tromans A."/>
            <person name="Tubby B."/>
            <person name="Wall M."/>
            <person name="Wallis J.M."/>
            <person name="West A.P."/>
            <person name="Whitehead S.L."/>
            <person name="Willey D.L."/>
            <person name="Wilming L."/>
            <person name="Wray P.W."/>
            <person name="Wright M.W."/>
            <person name="Young L."/>
            <person name="Coulson A."/>
            <person name="Durbin R.M."/>
            <person name="Hubbard T."/>
            <person name="Sulston J.E."/>
            <person name="Beck S."/>
            <person name="Bentley D.R."/>
            <person name="Rogers J."/>
            <person name="Ross M.T."/>
        </authorList>
    </citation>
    <scope>NUCLEOTIDE SEQUENCE [LARGE SCALE GENOMIC DNA]</scope>
</reference>
<reference key="3">
    <citation type="journal article" date="2004" name="Genome Res.">
        <title>The status, quality, and expansion of the NIH full-length cDNA project: the Mammalian Gene Collection (MGC).</title>
        <authorList>
            <consortium name="The MGC Project Team"/>
        </authorList>
    </citation>
    <scope>NUCLEOTIDE SEQUENCE [LARGE SCALE MRNA] (ISOFORM 1)</scope>
</reference>
<reference key="4">
    <citation type="journal article" date="2005" name="Cancer Res.">
        <title>A polycistronic microRNA cluster, miR-17-92, is overexpressed in human lung cancers and enhances cell proliferation.</title>
        <authorList>
            <person name="Hayashita Y."/>
            <person name="Osada H."/>
            <person name="Tatematsu Y."/>
            <person name="Yamada H."/>
            <person name="Yanagisawa K."/>
            <person name="Tomida S."/>
            <person name="Yatabe Y."/>
            <person name="Kawahara K."/>
            <person name="Sekido Y."/>
            <person name="Takahashi T."/>
        </authorList>
    </citation>
    <scope>IDENTIFICATION</scope>
</reference>
<reference key="5">
    <citation type="journal article" date="2011" name="Nat. Genet.">
        <title>Germline deletion of the miR-17 approximately 92 cluster causes skeletal and growth defects in humans.</title>
        <authorList>
            <person name="de Pontual L."/>
            <person name="Yao E."/>
            <person name="Callier P."/>
            <person name="Faivre L."/>
            <person name="Drouin V."/>
            <person name="Cariou S."/>
            <person name="Van Haeringen A."/>
            <person name="Genevieve D."/>
            <person name="Goldenberg A."/>
            <person name="Oufadem M."/>
            <person name="Manouvrier S."/>
            <person name="Munnich A."/>
            <person name="Vidigal J.A."/>
            <person name="Vekemans M."/>
            <person name="Lyonnet S."/>
            <person name="Henrion-Caude A."/>
            <person name="Ventura A."/>
            <person name="Amiel J."/>
        </authorList>
    </citation>
    <scope>INVOLVEMENT IN FGLDS2</scope>
</reference>
<proteinExistence type="uncertain"/>
<feature type="chain" id="PRO_0000274511" description="Putative microRNA 17 host gene protein">
    <location>
        <begin position="1"/>
        <end position="70"/>
    </location>
</feature>
<feature type="topological domain" description="Cytoplasmic" evidence="1">
    <location>
        <begin position="1"/>
        <end position="20"/>
    </location>
</feature>
<feature type="transmembrane region" description="Helical" evidence="1">
    <location>
        <begin position="21"/>
        <end position="43"/>
    </location>
</feature>
<feature type="topological domain" description="Extracellular" evidence="1">
    <location>
        <begin position="44"/>
        <end position="70"/>
    </location>
</feature>
<feature type="splice variant" id="VSP_022775" description="In isoform 2." evidence="3">
    <original>YTWTKLPLNVPKLVLIYLQ</original>
    <variation>QTCLTTSQTWVFSCSLKTH</variation>
    <location>
        <begin position="14"/>
        <end position="32"/>
    </location>
</feature>
<feature type="splice variant" id="VSP_022776" description="In isoform 2." evidence="3">
    <location>
        <begin position="33"/>
        <end position="70"/>
    </location>
</feature>